<feature type="chain" id="PRO_0000141935" description="Methanogen homoaconitase small subunit 2">
    <location>
        <begin position="1"/>
        <end position="164"/>
    </location>
</feature>
<feature type="short sequence motif" description="YLRT">
    <location>
        <begin position="26"/>
        <end position="29"/>
    </location>
</feature>
<feature type="site" description="Critical for substrate specificity" evidence="1">
    <location>
        <position position="28"/>
    </location>
</feature>
<evidence type="ECO:0000250" key="1"/>
<evidence type="ECO:0000250" key="2">
    <source>
        <dbReference type="UniProtKB" id="Q58667"/>
    </source>
</evidence>
<evidence type="ECO:0000305" key="3"/>
<keyword id="KW-0456">Lyase</keyword>
<keyword id="KW-1185">Reference proteome</keyword>
<proteinExistence type="inferred from homology"/>
<accession>Q8TRF7</accession>
<dbReference type="EC" id="4.2.1.114" evidence="2"/>
<dbReference type="EMBL" id="AE010299">
    <property type="protein sequence ID" value="AAM04642.1"/>
    <property type="molecule type" value="Genomic_DNA"/>
</dbReference>
<dbReference type="RefSeq" id="WP_011021244.1">
    <property type="nucleotide sequence ID" value="NC_003552.1"/>
</dbReference>
<dbReference type="SMR" id="Q8TRF7"/>
<dbReference type="STRING" id="188937.MA_1223"/>
<dbReference type="EnsemblBacteria" id="AAM04642">
    <property type="protein sequence ID" value="AAM04642"/>
    <property type="gene ID" value="MA_1223"/>
</dbReference>
<dbReference type="GeneID" id="1473111"/>
<dbReference type="KEGG" id="mac:MA_1223"/>
<dbReference type="HOGENOM" id="CLU_081378_1_1_2"/>
<dbReference type="InParanoid" id="Q8TRF7"/>
<dbReference type="OrthoDB" id="6505at2157"/>
<dbReference type="PhylomeDB" id="Q8TRF7"/>
<dbReference type="UniPathway" id="UPA00919"/>
<dbReference type="Proteomes" id="UP000002487">
    <property type="component" value="Chromosome"/>
</dbReference>
<dbReference type="GO" id="GO:0004409">
    <property type="term" value="F:homoaconitate hydratase activity"/>
    <property type="evidence" value="ECO:0007669"/>
    <property type="project" value="UniProtKB-UniRule"/>
</dbReference>
<dbReference type="GO" id="GO:0019298">
    <property type="term" value="P:coenzyme B biosynthetic process"/>
    <property type="evidence" value="ECO:0007669"/>
    <property type="project" value="UniProtKB-UniRule"/>
</dbReference>
<dbReference type="CDD" id="cd01577">
    <property type="entry name" value="IPMI_Swivel"/>
    <property type="match status" value="1"/>
</dbReference>
<dbReference type="Gene3D" id="3.20.19.10">
    <property type="entry name" value="Aconitase, domain 4"/>
    <property type="match status" value="1"/>
</dbReference>
<dbReference type="HAMAP" id="MF_01032">
    <property type="entry name" value="LeuD_type2"/>
    <property type="match status" value="1"/>
</dbReference>
<dbReference type="InterPro" id="IPR015928">
    <property type="entry name" value="Aconitase/3IPM_dehydase_swvl"/>
</dbReference>
<dbReference type="InterPro" id="IPR000573">
    <property type="entry name" value="AconitaseA/IPMdHydase_ssu_swvl"/>
</dbReference>
<dbReference type="InterPro" id="IPR033940">
    <property type="entry name" value="IPMI_Swivel"/>
</dbReference>
<dbReference type="InterPro" id="IPR050075">
    <property type="entry name" value="LeuD"/>
</dbReference>
<dbReference type="InterPro" id="IPR011827">
    <property type="entry name" value="LeuD_type2/HacB/DmdB"/>
</dbReference>
<dbReference type="NCBIfam" id="TIGR02087">
    <property type="entry name" value="LEUD_arch"/>
    <property type="match status" value="1"/>
</dbReference>
<dbReference type="PANTHER" id="PTHR43345:SF2">
    <property type="entry name" value="3-ISOPROPYLMALATE DEHYDRATASE SMALL SUBUNIT 1"/>
    <property type="match status" value="1"/>
</dbReference>
<dbReference type="PANTHER" id="PTHR43345">
    <property type="entry name" value="3-ISOPROPYLMALATE DEHYDRATASE SMALL SUBUNIT 2-RELATED-RELATED"/>
    <property type="match status" value="1"/>
</dbReference>
<dbReference type="Pfam" id="PF00694">
    <property type="entry name" value="Aconitase_C"/>
    <property type="match status" value="1"/>
</dbReference>
<dbReference type="SUPFAM" id="SSF52016">
    <property type="entry name" value="LeuD/IlvD-like"/>
    <property type="match status" value="1"/>
</dbReference>
<reference key="1">
    <citation type="journal article" date="2002" name="Genome Res.">
        <title>The genome of Methanosarcina acetivorans reveals extensive metabolic and physiological diversity.</title>
        <authorList>
            <person name="Galagan J.E."/>
            <person name="Nusbaum C."/>
            <person name="Roy A."/>
            <person name="Endrizzi M.G."/>
            <person name="Macdonald P."/>
            <person name="FitzHugh W."/>
            <person name="Calvo S."/>
            <person name="Engels R."/>
            <person name="Smirnov S."/>
            <person name="Atnoor D."/>
            <person name="Brown A."/>
            <person name="Allen N."/>
            <person name="Naylor J."/>
            <person name="Stange-Thomann N."/>
            <person name="DeArellano K."/>
            <person name="Johnson R."/>
            <person name="Linton L."/>
            <person name="McEwan P."/>
            <person name="McKernan K."/>
            <person name="Talamas J."/>
            <person name="Tirrell A."/>
            <person name="Ye W."/>
            <person name="Zimmer A."/>
            <person name="Barber R.D."/>
            <person name="Cann I."/>
            <person name="Graham D.E."/>
            <person name="Grahame D.A."/>
            <person name="Guss A.M."/>
            <person name="Hedderich R."/>
            <person name="Ingram-Smith C."/>
            <person name="Kuettner H.C."/>
            <person name="Krzycki J.A."/>
            <person name="Leigh J.A."/>
            <person name="Li W."/>
            <person name="Liu J."/>
            <person name="Mukhopadhyay B."/>
            <person name="Reeve J.N."/>
            <person name="Smith K."/>
            <person name="Springer T.A."/>
            <person name="Umayam L.A."/>
            <person name="White O."/>
            <person name="White R.H."/>
            <person name="de Macario E.C."/>
            <person name="Ferry J.G."/>
            <person name="Jarrell K.F."/>
            <person name="Jing H."/>
            <person name="Macario A.J.L."/>
            <person name="Paulsen I.T."/>
            <person name="Pritchett M."/>
            <person name="Sowers K.R."/>
            <person name="Swanson R.V."/>
            <person name="Zinder S.H."/>
            <person name="Lander E."/>
            <person name="Metcalf W.W."/>
            <person name="Birren B."/>
        </authorList>
    </citation>
    <scope>NUCLEOTIDE SEQUENCE [LARGE SCALE GENOMIC DNA]</scope>
    <source>
        <strain>ATCC 35395 / DSM 2834 / JCM 12185 / C2A</strain>
    </source>
</reference>
<organism>
    <name type="scientific">Methanosarcina acetivorans (strain ATCC 35395 / DSM 2834 / JCM 12185 / C2A)</name>
    <dbReference type="NCBI Taxonomy" id="188937"/>
    <lineage>
        <taxon>Archaea</taxon>
        <taxon>Methanobacteriati</taxon>
        <taxon>Methanobacteriota</taxon>
        <taxon>Stenosarchaea group</taxon>
        <taxon>Methanomicrobia</taxon>
        <taxon>Methanosarcinales</taxon>
        <taxon>Methanosarcinaceae</taxon>
        <taxon>Methanosarcina</taxon>
    </lineage>
</organism>
<gene>
    <name type="primary">hacB2</name>
    <name type="ordered locus">MA_1223</name>
</gene>
<protein>
    <recommendedName>
        <fullName>Methanogen homoaconitase small subunit 2</fullName>
        <shortName>HACN 2</shortName>
        <ecNumber evidence="2">4.2.1.114</ecNumber>
    </recommendedName>
    <alternativeName>
        <fullName>Homoaconitate hydratase 2</fullName>
    </alternativeName>
</protein>
<name>HACB2_METAC</name>
<sequence length="164" mass="17963">MANPIVGRVWKFGDDINTDAIIPGKYLRTRDMQIFGTHAMEGIDPEFTKKAKPGDIIVAGTNFGCGSSREQAPLALKHSGIACIVAKSFARIFFRNAINIGLPLMEADVECQEGDEIKVDLFKGEVLVPEKGIFKGNKLPDFLLDILNDGGLVAHRKKVKGEHK</sequence>
<comment type="function">
    <text evidence="2">Component of a hydro-lyase with broad substrate specificity for cis-unsaturated tricarboxylic acids. Catalyzes both the reversible dehydration of (R)-homocitrate ((R)-2-hydroxybutane-1,2,4-tricarboxylate) to produce cis-homoaconitate ((Z)-but-1-ene-1,2,4-tricarboxylate), and its hydration to homoisocitrate ((1R,2S)-1-hydroxybutane-1,2,4-tricarboxylate). Is also able to hydrate the analogous longer chain substrates cis-homo(2)-aconitate, cis-homo(3)-aconitate. These reactions are part of the biosynthesis pathway of coenzyme B.</text>
</comment>
<comment type="catalytic activity">
    <reaction evidence="2">
        <text>(2R)-homocitrate = (2R,3S)-homoisocitrate</text>
        <dbReference type="Rhea" id="RHEA:32303"/>
        <dbReference type="ChEBI" id="CHEBI:15404"/>
        <dbReference type="ChEBI" id="CHEBI:58884"/>
        <dbReference type="EC" id="4.2.1.114"/>
    </reaction>
    <physiologicalReaction direction="left-to-right" evidence="2">
        <dbReference type="Rhea" id="RHEA:32304"/>
    </physiologicalReaction>
</comment>
<comment type="catalytic activity">
    <reaction evidence="2">
        <text>(2R)-homocitrate = cis-homoaconitate + H2O</text>
        <dbReference type="Rhea" id="RHEA:26101"/>
        <dbReference type="ChEBI" id="CHEBI:15377"/>
        <dbReference type="ChEBI" id="CHEBI:58174"/>
        <dbReference type="ChEBI" id="CHEBI:58884"/>
    </reaction>
    <physiologicalReaction direction="left-to-right" evidence="2">
        <dbReference type="Rhea" id="RHEA:26102"/>
    </physiologicalReaction>
</comment>
<comment type="catalytic activity">
    <reaction evidence="2">
        <text>(2R,3S)-homoisocitrate = cis-homoaconitate + H2O</text>
        <dbReference type="Rhea" id="RHEA:15485"/>
        <dbReference type="ChEBI" id="CHEBI:15377"/>
        <dbReference type="ChEBI" id="CHEBI:15404"/>
        <dbReference type="ChEBI" id="CHEBI:58174"/>
    </reaction>
    <physiologicalReaction direction="right-to-left" evidence="2">
        <dbReference type="Rhea" id="RHEA:15487"/>
    </physiologicalReaction>
</comment>
<comment type="catalytic activity">
    <reaction evidence="2">
        <text>cis-(homo)2aconitate + H2O = (2R,3S)-iso(homo)2citrate</text>
        <dbReference type="Rhea" id="RHEA:68416"/>
        <dbReference type="ChEBI" id="CHEBI:15377"/>
        <dbReference type="ChEBI" id="CHEBI:72710"/>
        <dbReference type="ChEBI" id="CHEBI:72722"/>
        <dbReference type="EC" id="4.2.1.114"/>
    </reaction>
    <physiologicalReaction direction="left-to-right" evidence="2">
        <dbReference type="Rhea" id="RHEA:68417"/>
    </physiologicalReaction>
</comment>
<comment type="catalytic activity">
    <reaction evidence="2">
        <text>cis-(homo)3aconitate + H2O = (2R,3S)-iso(homo)3citrate</text>
        <dbReference type="Rhea" id="RHEA:68420"/>
        <dbReference type="ChEBI" id="CHEBI:15377"/>
        <dbReference type="ChEBI" id="CHEBI:72712"/>
        <dbReference type="ChEBI" id="CHEBI:177881"/>
        <dbReference type="EC" id="4.2.1.114"/>
    </reaction>
    <physiologicalReaction direction="left-to-right" evidence="2">
        <dbReference type="Rhea" id="RHEA:68421"/>
    </physiologicalReaction>
</comment>
<comment type="pathway">
    <text evidence="2">Organic acid metabolism; 2-oxosuberate biosynthesis.</text>
</comment>
<comment type="subunit">
    <text evidence="2">Heterotetramer of 2 HacA and 2 HacB proteins. Cannot form a complex with LeuC.</text>
</comment>
<comment type="similarity">
    <text evidence="3">Belongs to the LeuD family. LeuD type 2 subfamily.</text>
</comment>
<comment type="caution">
    <text evidence="3">Functional assignment as methanogen HACN has been made based on the presence of the YLRT motif involved in substrate specificity as discussed in PubMed:20170198.</text>
</comment>